<proteinExistence type="inferred from homology"/>
<accession>P23774</accession>
<comment type="function">
    <text evidence="3">Positive regulator of the expression of the 987P operon for the fimbrial protein in enterotoxigenic E.coli (PubMed:2077360).</text>
</comment>
<comment type="subunit">
    <text evidence="1">Homodimer.</text>
</comment>
<reference key="1">
    <citation type="journal article" date="1990" name="Mol. Microbiol.">
        <title>Characterization of FapR, a positive regulator of expression of the 987P operon in enterotoxigenic Escherichia coli.</title>
        <authorList>
            <person name="Klaasen P."/>
            <person name="de Graaf F.K."/>
        </authorList>
    </citation>
    <scope>NUCLEOTIDE SEQUENCE [GENOMIC DNA]</scope>
    <source>
        <strain>O64:K- / ETEC</strain>
    </source>
</reference>
<gene>
    <name evidence="4" type="primary">fapR</name>
</gene>
<sequence length="260" mass="30349">MKLKNIHLYNYVVIYTKNCEIYINKGNEQVYIPPRMVAIFEKNISFNIETIRKGDGVLYESFDMKHELLTSLRRVIEPSVKFAAESYTNKRSFKERIFKVKSCSIVIDLFKRLKDNGSPEFTAIYELAFLVSKCENPSMFAISLFSSVAVTFSERIVTLLFSDLTRKWKLSDIAEEMHISEISVRKRLEQECLNFNQLILDVRMNQAAKFIIRSDHQIGMIASLVGYTSVSYFIKTFKEYYGVTPKKFEIGIKENLRCNR</sequence>
<organism>
    <name type="scientific">Escherichia coli</name>
    <dbReference type="NCBI Taxonomy" id="562"/>
    <lineage>
        <taxon>Bacteria</taxon>
        <taxon>Pseudomonadati</taxon>
        <taxon>Pseudomonadota</taxon>
        <taxon>Gammaproteobacteria</taxon>
        <taxon>Enterobacterales</taxon>
        <taxon>Enterobacteriaceae</taxon>
        <taxon>Escherichia</taxon>
    </lineage>
</organism>
<protein>
    <recommendedName>
        <fullName evidence="5">HTH-type transcriptional activator FapR</fullName>
    </recommendedName>
    <alternativeName>
        <fullName evidence="4">987P fimbrial operon positive regulatory protein FapR</fullName>
    </alternativeName>
</protein>
<name>FAPR_ECOLX</name>
<feature type="chain" id="PRO_0000194512" description="HTH-type transcriptional activator FapR">
    <location>
        <begin position="1"/>
        <end position="260"/>
    </location>
</feature>
<feature type="domain" description="HTH araC/xylS-type" evidence="2">
    <location>
        <begin position="154"/>
        <end position="251"/>
    </location>
</feature>
<feature type="DNA-binding region" description="H-T-H motif" evidence="2">
    <location>
        <begin position="171"/>
        <end position="192"/>
    </location>
</feature>
<feature type="DNA-binding region" description="H-T-H motif" evidence="2">
    <location>
        <begin position="218"/>
        <end position="241"/>
    </location>
</feature>
<dbReference type="EMBL" id="X53494">
    <property type="protein sequence ID" value="CAA37578.1"/>
    <property type="molecule type" value="Genomic_DNA"/>
</dbReference>
<dbReference type="PIR" id="S11984">
    <property type="entry name" value="S11984"/>
</dbReference>
<dbReference type="SMR" id="P23774"/>
<dbReference type="GO" id="GO:0005829">
    <property type="term" value="C:cytosol"/>
    <property type="evidence" value="ECO:0007669"/>
    <property type="project" value="TreeGrafter"/>
</dbReference>
<dbReference type="GO" id="GO:0003700">
    <property type="term" value="F:DNA-binding transcription factor activity"/>
    <property type="evidence" value="ECO:0007669"/>
    <property type="project" value="InterPro"/>
</dbReference>
<dbReference type="GO" id="GO:0000976">
    <property type="term" value="F:transcription cis-regulatory region binding"/>
    <property type="evidence" value="ECO:0007669"/>
    <property type="project" value="TreeGrafter"/>
</dbReference>
<dbReference type="Gene3D" id="1.10.10.60">
    <property type="entry name" value="Homeodomain-like"/>
    <property type="match status" value="1"/>
</dbReference>
<dbReference type="InterPro" id="IPR009057">
    <property type="entry name" value="Homeodomain-like_sf"/>
</dbReference>
<dbReference type="InterPro" id="IPR018060">
    <property type="entry name" value="HTH_AraC"/>
</dbReference>
<dbReference type="InterPro" id="IPR018062">
    <property type="entry name" value="HTH_AraC-typ_CS"/>
</dbReference>
<dbReference type="InterPro" id="IPR020449">
    <property type="entry name" value="Tscrpt_reg_AraC-type_HTH"/>
</dbReference>
<dbReference type="PANTHER" id="PTHR47894">
    <property type="entry name" value="HTH-TYPE TRANSCRIPTIONAL REGULATOR GADX"/>
    <property type="match status" value="1"/>
</dbReference>
<dbReference type="PANTHER" id="PTHR47894:SF4">
    <property type="entry name" value="HTH-TYPE TRANSCRIPTIONAL REGULATOR GADX"/>
    <property type="match status" value="1"/>
</dbReference>
<dbReference type="Pfam" id="PF12833">
    <property type="entry name" value="HTH_18"/>
    <property type="match status" value="1"/>
</dbReference>
<dbReference type="PRINTS" id="PR00032">
    <property type="entry name" value="HTHARAC"/>
</dbReference>
<dbReference type="SMART" id="SM00342">
    <property type="entry name" value="HTH_ARAC"/>
    <property type="match status" value="1"/>
</dbReference>
<dbReference type="SUPFAM" id="SSF46689">
    <property type="entry name" value="Homeodomain-like"/>
    <property type="match status" value="1"/>
</dbReference>
<dbReference type="PROSITE" id="PS00041">
    <property type="entry name" value="HTH_ARAC_FAMILY_1"/>
    <property type="match status" value="1"/>
</dbReference>
<dbReference type="PROSITE" id="PS01124">
    <property type="entry name" value="HTH_ARAC_FAMILY_2"/>
    <property type="match status" value="1"/>
</dbReference>
<evidence type="ECO:0000250" key="1">
    <source>
        <dbReference type="UniProtKB" id="P16114"/>
    </source>
</evidence>
<evidence type="ECO:0000255" key="2">
    <source>
        <dbReference type="PROSITE-ProRule" id="PRU00593"/>
    </source>
</evidence>
<evidence type="ECO:0000269" key="3">
    <source>
    </source>
</evidence>
<evidence type="ECO:0000303" key="4">
    <source>
    </source>
</evidence>
<evidence type="ECO:0000305" key="5"/>
<keyword id="KW-0010">Activator</keyword>
<keyword id="KW-0238">DNA-binding</keyword>
<keyword id="KW-0804">Transcription</keyword>
<keyword id="KW-0805">Transcription regulation</keyword>